<comment type="function">
    <text evidence="2">Facilitates sperm penetration into the layer of cumulus cells surrounding the egg by digesting hyaluronic acid. Involved in induction of the acrosome reaction in the sperm. Involved in follicular atresia, the breakdown of immature ovarian follicles that are not selected to ovulate. Induces ovarian granulosa cell apoptosis, possibly via apoptotic signaling pathway involving CASP8 and CASP3 activation, and poly(ADP-ribose) polymerase (PARP) cleavage. Has no hyaluronidase activity in embryonic fibroblasts in vitro. Has no hyaluronidase activity in granulosa cells in vitro.</text>
</comment>
<comment type="catalytic activity">
    <reaction evidence="2">
        <text>Random hydrolysis of (1-&gt;4)-linkages between N-acetyl-beta-D-glucosamine and D-glucuronate residues in hyaluronate.</text>
        <dbReference type="EC" id="3.2.1.35"/>
    </reaction>
</comment>
<comment type="subcellular location">
    <subcellularLocation>
        <location evidence="2">Secreted</location>
    </subcellularLocation>
    <subcellularLocation>
        <location evidence="2">Cell membrane</location>
    </subcellularLocation>
    <subcellularLocation>
        <location evidence="2">Cytoplasmic vesicle</location>
        <location evidence="2">Secretory vesicle</location>
        <location evidence="2">Acrosome</location>
    </subcellularLocation>
    <subcellularLocation>
        <location evidence="2">Endoplasmic reticulum</location>
    </subcellularLocation>
    <subcellularLocation>
        <location evidence="2">Early endosome</location>
    </subcellularLocation>
    <text evidence="2">Mostly present in low-density vesicles. Low levels in higher density vesicles of late endosomes and lysosomes. Localized in punctate cytoplasmic vesicles and in perinuclear structures, but does not colocalize with LAMP1. Localized on the plasma membrane over the acrosome and on the surface of the midpiece of the sperm tail.</text>
</comment>
<comment type="tissue specificity">
    <text evidence="4">Highly expressed in bladder, spleen and liver. Expressed at low levels in the kidney.</text>
</comment>
<comment type="PTM">
    <text evidence="2">N-glycosylated.</text>
</comment>
<comment type="similarity">
    <text evidence="5">Belongs to the glycosyl hydrolase 56 family.</text>
</comment>
<accession>Q6RHW2</accession>
<accession>Q6S3P5</accession>
<proteinExistence type="evidence at transcript level"/>
<gene>
    <name type="primary">HYAL3</name>
</gene>
<evidence type="ECO:0000250" key="1">
    <source>
        <dbReference type="UniProtKB" id="Q12794"/>
    </source>
</evidence>
<evidence type="ECO:0000250" key="2">
    <source>
        <dbReference type="UniProtKB" id="Q8VEI3"/>
    </source>
</evidence>
<evidence type="ECO:0000255" key="3"/>
<evidence type="ECO:0000269" key="4">
    <source>
    </source>
</evidence>
<evidence type="ECO:0000305" key="5"/>
<name>HYAL3_PIG</name>
<keyword id="KW-1003">Cell membrane</keyword>
<keyword id="KW-0968">Cytoplasmic vesicle</keyword>
<keyword id="KW-1015">Disulfide bond</keyword>
<keyword id="KW-0245">EGF-like domain</keyword>
<keyword id="KW-0256">Endoplasmic reticulum</keyword>
<keyword id="KW-0967">Endosome</keyword>
<keyword id="KW-0278">Fertilization</keyword>
<keyword id="KW-0325">Glycoprotein</keyword>
<keyword id="KW-0326">Glycosidase</keyword>
<keyword id="KW-0378">Hydrolase</keyword>
<keyword id="KW-0472">Membrane</keyword>
<keyword id="KW-1185">Reference proteome</keyword>
<keyword id="KW-0964">Secreted</keyword>
<keyword id="KW-0732">Signal</keyword>
<reference key="1">
    <citation type="journal article" date="2004" name="Cytogenet. Genome Res.">
        <title>Molecular characterization of porcine hyaluronidase genes 1, 2, and 3 clustered on SSC13q21.</title>
        <authorList>
            <person name="Gatphayak K."/>
            <person name="Knorr C."/>
            <person name="Beck J."/>
            <person name="Brenig B."/>
        </authorList>
    </citation>
    <scope>NUCLEOTIDE SEQUENCE [MRNA]</scope>
    <scope>TISSUE SPECIFICITY</scope>
</reference>
<reference key="2">
    <citation type="journal article" date="2003" name="Cytogenet. Genome Res.">
        <title>Assignment of the porcine hyaluronidase-3 (HYAL3) gene to SSC13--&gt;q21 by FISH and confirmation by hybrid panel analyses.</title>
        <authorList>
            <person name="Gatphayak K."/>
            <person name="Knorr C."/>
            <person name="Habermann F."/>
            <person name="Fries R."/>
            <person name="Brenig B."/>
        </authorList>
    </citation>
    <scope>NUCLEOTIDE SEQUENCE [GENOMIC DNA] OF 127-247</scope>
</reference>
<organism>
    <name type="scientific">Sus scrofa</name>
    <name type="common">Pig</name>
    <dbReference type="NCBI Taxonomy" id="9823"/>
    <lineage>
        <taxon>Eukaryota</taxon>
        <taxon>Metazoa</taxon>
        <taxon>Chordata</taxon>
        <taxon>Craniata</taxon>
        <taxon>Vertebrata</taxon>
        <taxon>Euteleostomi</taxon>
        <taxon>Mammalia</taxon>
        <taxon>Eutheria</taxon>
        <taxon>Laurasiatheria</taxon>
        <taxon>Artiodactyla</taxon>
        <taxon>Suina</taxon>
        <taxon>Suidae</taxon>
        <taxon>Sus</taxon>
    </lineage>
</organism>
<dbReference type="EC" id="3.2.1.35"/>
<dbReference type="EMBL" id="AY497545">
    <property type="protein sequence ID" value="AAR91601.1"/>
    <property type="molecule type" value="mRNA"/>
</dbReference>
<dbReference type="EMBL" id="AY472019">
    <property type="protein sequence ID" value="AAR33037.1"/>
    <property type="molecule type" value="Genomic_DNA"/>
</dbReference>
<dbReference type="RefSeq" id="NP_999604.1">
    <property type="nucleotide sequence ID" value="NM_214439.1"/>
</dbReference>
<dbReference type="SMR" id="Q6RHW2"/>
<dbReference type="FunCoup" id="Q6RHW2">
    <property type="interactions" value="471"/>
</dbReference>
<dbReference type="STRING" id="9823.ENSSSCP00000052110"/>
<dbReference type="CAZy" id="GH56">
    <property type="family name" value="Glycoside Hydrolase Family 56"/>
</dbReference>
<dbReference type="GlyCosmos" id="Q6RHW2">
    <property type="glycosylation" value="2 sites, No reported glycans"/>
</dbReference>
<dbReference type="GlyGen" id="Q6RHW2">
    <property type="glycosylation" value="2 sites"/>
</dbReference>
<dbReference type="PaxDb" id="9823-ENSSSCP00000012156"/>
<dbReference type="GeneID" id="404696"/>
<dbReference type="KEGG" id="ssc:404696"/>
<dbReference type="CTD" id="8372"/>
<dbReference type="eggNOG" id="ENOG502QTXP">
    <property type="taxonomic scope" value="Eukaryota"/>
</dbReference>
<dbReference type="InParanoid" id="Q6RHW2"/>
<dbReference type="OrthoDB" id="5796153at2759"/>
<dbReference type="BRENDA" id="3.2.1.35">
    <property type="organism ID" value="6170"/>
</dbReference>
<dbReference type="Proteomes" id="UP000008227">
    <property type="component" value="Unplaced"/>
</dbReference>
<dbReference type="Proteomes" id="UP000314985">
    <property type="component" value="Unplaced"/>
</dbReference>
<dbReference type="Proteomes" id="UP000694570">
    <property type="component" value="Unplaced"/>
</dbReference>
<dbReference type="Proteomes" id="UP000694571">
    <property type="component" value="Unplaced"/>
</dbReference>
<dbReference type="Proteomes" id="UP000694720">
    <property type="component" value="Unplaced"/>
</dbReference>
<dbReference type="Proteomes" id="UP000694722">
    <property type="component" value="Unplaced"/>
</dbReference>
<dbReference type="Proteomes" id="UP000694723">
    <property type="component" value="Unplaced"/>
</dbReference>
<dbReference type="Proteomes" id="UP000694724">
    <property type="component" value="Unplaced"/>
</dbReference>
<dbReference type="Proteomes" id="UP000694725">
    <property type="component" value="Unplaced"/>
</dbReference>
<dbReference type="Proteomes" id="UP000694726">
    <property type="component" value="Unplaced"/>
</dbReference>
<dbReference type="Proteomes" id="UP000694727">
    <property type="component" value="Unplaced"/>
</dbReference>
<dbReference type="Proteomes" id="UP000694728">
    <property type="component" value="Unplaced"/>
</dbReference>
<dbReference type="GO" id="GO:0002080">
    <property type="term" value="C:acrosomal membrane"/>
    <property type="evidence" value="ECO:0000250"/>
    <property type="project" value="UniProtKB"/>
</dbReference>
<dbReference type="GO" id="GO:0001669">
    <property type="term" value="C:acrosomal vesicle"/>
    <property type="evidence" value="ECO:0000250"/>
    <property type="project" value="UniProtKB"/>
</dbReference>
<dbReference type="GO" id="GO:0031410">
    <property type="term" value="C:cytoplasmic vesicle"/>
    <property type="evidence" value="ECO:0000250"/>
    <property type="project" value="UniProtKB"/>
</dbReference>
<dbReference type="GO" id="GO:0005769">
    <property type="term" value="C:early endosome"/>
    <property type="evidence" value="ECO:0000250"/>
    <property type="project" value="UniProtKB"/>
</dbReference>
<dbReference type="GO" id="GO:0005783">
    <property type="term" value="C:endoplasmic reticulum"/>
    <property type="evidence" value="ECO:0000250"/>
    <property type="project" value="UniProtKB"/>
</dbReference>
<dbReference type="GO" id="GO:0005576">
    <property type="term" value="C:extracellular region"/>
    <property type="evidence" value="ECO:0007669"/>
    <property type="project" value="UniProtKB-SubCell"/>
</dbReference>
<dbReference type="GO" id="GO:0005886">
    <property type="term" value="C:plasma membrane"/>
    <property type="evidence" value="ECO:0007669"/>
    <property type="project" value="UniProtKB-SubCell"/>
</dbReference>
<dbReference type="GO" id="GO:0097225">
    <property type="term" value="C:sperm midpiece"/>
    <property type="evidence" value="ECO:0000250"/>
    <property type="project" value="UniProtKB"/>
</dbReference>
<dbReference type="GO" id="GO:0004415">
    <property type="term" value="F:hyalurononglucosaminidase activity"/>
    <property type="evidence" value="ECO:0000250"/>
    <property type="project" value="UniProtKB"/>
</dbReference>
<dbReference type="GO" id="GO:0005975">
    <property type="term" value="P:carbohydrate metabolic process"/>
    <property type="evidence" value="ECO:0007669"/>
    <property type="project" value="InterPro"/>
</dbReference>
<dbReference type="GO" id="GO:0030214">
    <property type="term" value="P:hyaluronan catabolic process"/>
    <property type="evidence" value="ECO:0000250"/>
    <property type="project" value="UniProtKB"/>
</dbReference>
<dbReference type="GO" id="GO:2000355">
    <property type="term" value="P:negative regulation of ovarian follicle development"/>
    <property type="evidence" value="ECO:0000250"/>
    <property type="project" value="UniProtKB"/>
</dbReference>
<dbReference type="GO" id="GO:0001552">
    <property type="term" value="P:ovarian follicle atresia"/>
    <property type="evidence" value="ECO:0000250"/>
    <property type="project" value="UniProtKB"/>
</dbReference>
<dbReference type="GO" id="GO:0007341">
    <property type="term" value="P:penetration of zona pellucida"/>
    <property type="evidence" value="ECO:0000250"/>
    <property type="project" value="UniProtKB"/>
</dbReference>
<dbReference type="GO" id="GO:2000368">
    <property type="term" value="P:positive regulation of acrosomal vesicle exocytosis"/>
    <property type="evidence" value="ECO:0000250"/>
    <property type="project" value="UniProtKB"/>
</dbReference>
<dbReference type="FunFam" id="3.20.20.70:FF:000065">
    <property type="entry name" value="Hyaluronidase"/>
    <property type="match status" value="1"/>
</dbReference>
<dbReference type="Gene3D" id="3.20.20.70">
    <property type="entry name" value="Aldolase class I"/>
    <property type="match status" value="1"/>
</dbReference>
<dbReference type="InterPro" id="IPR013785">
    <property type="entry name" value="Aldolase_TIM"/>
</dbReference>
<dbReference type="InterPro" id="IPR017853">
    <property type="entry name" value="Glycoside_hydrolase_SF"/>
</dbReference>
<dbReference type="InterPro" id="IPR018155">
    <property type="entry name" value="Hyaluronidase"/>
</dbReference>
<dbReference type="InterPro" id="IPR027260">
    <property type="entry name" value="Hyaluronidase-3"/>
</dbReference>
<dbReference type="PANTHER" id="PTHR11769">
    <property type="entry name" value="HYALURONIDASE"/>
    <property type="match status" value="1"/>
</dbReference>
<dbReference type="PANTHER" id="PTHR11769:SF19">
    <property type="entry name" value="HYALURONIDASE-3"/>
    <property type="match status" value="1"/>
</dbReference>
<dbReference type="Pfam" id="PF01630">
    <property type="entry name" value="Glyco_hydro_56"/>
    <property type="match status" value="1"/>
</dbReference>
<dbReference type="PIRSF" id="PIRSF038193">
    <property type="entry name" value="Hyaluronidase"/>
    <property type="match status" value="1"/>
</dbReference>
<dbReference type="PIRSF" id="PIRSF500776">
    <property type="entry name" value="Hyaluronidase_3"/>
    <property type="match status" value="1"/>
</dbReference>
<dbReference type="PRINTS" id="PR00846">
    <property type="entry name" value="GLHYDRLASE56"/>
</dbReference>
<dbReference type="SUPFAM" id="SSF51445">
    <property type="entry name" value="(Trans)glycosidases"/>
    <property type="match status" value="1"/>
</dbReference>
<dbReference type="PROSITE" id="PS00022">
    <property type="entry name" value="EGF_1"/>
    <property type="match status" value="1"/>
</dbReference>
<dbReference type="PROSITE" id="PS01186">
    <property type="entry name" value="EGF_2"/>
    <property type="match status" value="1"/>
</dbReference>
<feature type="signal peptide" evidence="3">
    <location>
        <begin position="1"/>
        <end position="16"/>
    </location>
</feature>
<feature type="chain" id="PRO_0000248202" description="Hyaluronidase-3">
    <location>
        <begin position="17"/>
        <end position="419"/>
    </location>
</feature>
<feature type="domain" description="EGF-like">
    <location>
        <begin position="352"/>
        <end position="407"/>
    </location>
</feature>
<feature type="active site" description="Proton donor" evidence="1">
    <location>
        <position position="129"/>
    </location>
</feature>
<feature type="glycosylation site" description="N-linked (GlcNAc...) asparagine" evidence="3">
    <location>
        <position position="69"/>
    </location>
</feature>
<feature type="glycosylation site" description="N-linked (GlcNAc...) asparagine" evidence="3">
    <location>
        <position position="215"/>
    </location>
</feature>
<feature type="disulfide bond" evidence="1">
    <location>
        <begin position="42"/>
        <end position="331"/>
    </location>
</feature>
<feature type="disulfide bond" evidence="1">
    <location>
        <begin position="205"/>
        <end position="220"/>
    </location>
</feature>
<feature type="disulfide bond" evidence="1">
    <location>
        <begin position="356"/>
        <end position="367"/>
    </location>
</feature>
<feature type="disulfide bond" evidence="1">
    <location>
        <begin position="361"/>
        <end position="395"/>
    </location>
</feature>
<feature type="disulfide bond" evidence="1">
    <location>
        <begin position="397"/>
        <end position="406"/>
    </location>
</feature>
<sequence length="419" mass="46393">MTMQLGLALVLGVAMCLGCGQPLLRAPERPFCVLWNVPSARCKARFGVHLPLEALGITANHGQRFHGQNITIFYKSQLGLYPYFGPRGTAHNGGIPQAVSLDHHLARAAYQIHRSLRPGFTGLAVLDWEEWCPLWAGNWGRRQAYQAASCAWAQRVYPNLDPQEQLCKARAGFEEAARALMEDTLRLGRMLRPHGLWGFYHYPACGNGWHGTASNYTGHCHAAALARNTQLYWLWAASSALFPSIYLPPGLPPAYHQAFVRYRLEEAFRVALVGHPHPLPVLAYARLTHRNSGRFLSQDELVQTIGVSAALGASGVVLWGDLSFSSSEEECWHLRGYLVGTLGPYVINVTRAAMACSHQRCHGHGRCAWQDPGQLKVFLHLHPGGSPGAWESFSCRCYWGWAGPTCQEPRPELGPEEAT</sequence>
<protein>
    <recommendedName>
        <fullName>Hyaluronidase-3</fullName>
        <shortName>Hyal-3</shortName>
        <ecNumber>3.2.1.35</ecNumber>
    </recommendedName>
    <alternativeName>
        <fullName>Hyaluronoglucosaminidase-3</fullName>
    </alternativeName>
</protein>